<comment type="function">
    <text evidence="1">Catalyzes the attachment of glutamate to tRNA(Glu) in a two-step reaction: glutamate is first activated by ATP to form Glu-AMP and then transferred to the acceptor end of tRNA(Glu).</text>
</comment>
<comment type="catalytic activity">
    <reaction evidence="1">
        <text>tRNA(Glu) + L-glutamate + ATP = L-glutamyl-tRNA(Glu) + AMP + diphosphate</text>
        <dbReference type="Rhea" id="RHEA:23540"/>
        <dbReference type="Rhea" id="RHEA-COMP:9663"/>
        <dbReference type="Rhea" id="RHEA-COMP:9680"/>
        <dbReference type="ChEBI" id="CHEBI:29985"/>
        <dbReference type="ChEBI" id="CHEBI:30616"/>
        <dbReference type="ChEBI" id="CHEBI:33019"/>
        <dbReference type="ChEBI" id="CHEBI:78442"/>
        <dbReference type="ChEBI" id="CHEBI:78520"/>
        <dbReference type="ChEBI" id="CHEBI:456215"/>
        <dbReference type="EC" id="6.1.1.17"/>
    </reaction>
</comment>
<comment type="subcellular location">
    <subcellularLocation>
        <location evidence="1">Cytoplasm</location>
    </subcellularLocation>
</comment>
<comment type="similarity">
    <text evidence="1">Belongs to the class-I aminoacyl-tRNA synthetase family. Glutamate--tRNA ligase type 2 subfamily.</text>
</comment>
<comment type="sequence caution" evidence="2">
    <conflict type="erroneous initiation">
        <sequence resource="EMBL-CDS" id="CAC12071"/>
    </conflict>
</comment>
<gene>
    <name evidence="1" type="primary">gltX</name>
    <name type="ordered locus">Ta0942</name>
</gene>
<sequence length="548" mass="63450">MYEDDIRRIALINAYQHEGKADLKSVMGKVMAEIPDLRRDPRSAREMVSRIVDEVNSMSAYEIRETVETRYTSSIRKEKKVEEHRLPDLEGVNGPVVMRMAPSPSGPLHIGHTRMAILNDEYVKRYGGELILRIEDTNPKNIDPDAYHMIPEDLEWLGVNVTKIVIQSDRFDLYYAEAKKLMENGHMYVCTCPREEFKKRKLESIPCKDRDNPPETNLELFDKMIDGTIKEGDAVAVVKTDLKHPNPSVRDWIAFRIIEARHPRVDDKYRVYPMMSFSVAVDDHYLGLTHVLRGKDQLTNTDKQRYIFDYNGWKKPYYYHYGMIKFPGIKLKTSLMKKGILSGQYEGWSDIRLGTVRAFAKRGYRPETFRRYWINSGLREIDAIFSIEIFDSINREIVDPRAYRFSFVKDPVPVRIEGMPNISAKLPLHPTHPEYGFREYEVKGSVYIASRDFAAISEGERIRLKDLCYIRKKGNGIIYDGVEMTEKTKIINWCPEGSRDFSVLKPDGSKDSGLIEPKSSGYRGIAQLERYGYVNFADGDDLAYFTHP</sequence>
<proteinExistence type="inferred from homology"/>
<protein>
    <recommendedName>
        <fullName evidence="1">Glutamate--tRNA ligase</fullName>
        <ecNumber evidence="1">6.1.1.17</ecNumber>
    </recommendedName>
    <alternativeName>
        <fullName evidence="1">Glutamyl-tRNA synthetase</fullName>
        <shortName evidence="1">GluRS</shortName>
    </alternativeName>
</protein>
<accession>Q9HJM5</accession>
<evidence type="ECO:0000255" key="1">
    <source>
        <dbReference type="HAMAP-Rule" id="MF_02076"/>
    </source>
</evidence>
<evidence type="ECO:0000305" key="2"/>
<reference key="1">
    <citation type="journal article" date="2000" name="Nature">
        <title>The genome sequence of the thermoacidophilic scavenger Thermoplasma acidophilum.</title>
        <authorList>
            <person name="Ruepp A."/>
            <person name="Graml W."/>
            <person name="Santos-Martinez M.-L."/>
            <person name="Koretke K.K."/>
            <person name="Volker C."/>
            <person name="Mewes H.-W."/>
            <person name="Frishman D."/>
            <person name="Stocker S."/>
            <person name="Lupas A.N."/>
            <person name="Baumeister W."/>
        </authorList>
    </citation>
    <scope>NUCLEOTIDE SEQUENCE [LARGE SCALE GENOMIC DNA]</scope>
    <source>
        <strain>ATCC 25905 / DSM 1728 / JCM 9062 / NBRC 15155 / AMRC-C165</strain>
    </source>
</reference>
<keyword id="KW-0030">Aminoacyl-tRNA synthetase</keyword>
<keyword id="KW-0067">ATP-binding</keyword>
<keyword id="KW-0963">Cytoplasm</keyword>
<keyword id="KW-0436">Ligase</keyword>
<keyword id="KW-0547">Nucleotide-binding</keyword>
<keyword id="KW-0648">Protein biosynthesis</keyword>
<keyword id="KW-1185">Reference proteome</keyword>
<name>SYE_THEAC</name>
<organism>
    <name type="scientific">Thermoplasma acidophilum (strain ATCC 25905 / DSM 1728 / JCM 9062 / NBRC 15155 / AMRC-C165)</name>
    <dbReference type="NCBI Taxonomy" id="273075"/>
    <lineage>
        <taxon>Archaea</taxon>
        <taxon>Methanobacteriati</taxon>
        <taxon>Thermoplasmatota</taxon>
        <taxon>Thermoplasmata</taxon>
        <taxon>Thermoplasmatales</taxon>
        <taxon>Thermoplasmataceae</taxon>
        <taxon>Thermoplasma</taxon>
    </lineage>
</organism>
<dbReference type="EC" id="6.1.1.17" evidence="1"/>
<dbReference type="EMBL" id="AL445066">
    <property type="protein sequence ID" value="CAC12071.1"/>
    <property type="status" value="ALT_INIT"/>
    <property type="molecule type" value="Genomic_DNA"/>
</dbReference>
<dbReference type="RefSeq" id="WP_010901352.1">
    <property type="nucleotide sequence ID" value="NC_002578.1"/>
</dbReference>
<dbReference type="SMR" id="Q9HJM5"/>
<dbReference type="FunCoup" id="Q9HJM5">
    <property type="interactions" value="290"/>
</dbReference>
<dbReference type="STRING" id="273075.gene:9572160"/>
<dbReference type="PaxDb" id="273075-Ta0942"/>
<dbReference type="EnsemblBacteria" id="CAC12071">
    <property type="protein sequence ID" value="CAC12071"/>
    <property type="gene ID" value="CAC12071"/>
</dbReference>
<dbReference type="KEGG" id="tac:Ta0942"/>
<dbReference type="eggNOG" id="arCOG04302">
    <property type="taxonomic scope" value="Archaea"/>
</dbReference>
<dbReference type="HOGENOM" id="CLU_001882_1_3_2"/>
<dbReference type="InParanoid" id="Q9HJM5"/>
<dbReference type="OrthoDB" id="10470at2157"/>
<dbReference type="Proteomes" id="UP000001024">
    <property type="component" value="Chromosome"/>
</dbReference>
<dbReference type="GO" id="GO:0005829">
    <property type="term" value="C:cytosol"/>
    <property type="evidence" value="ECO:0007669"/>
    <property type="project" value="TreeGrafter"/>
</dbReference>
<dbReference type="GO" id="GO:0032991">
    <property type="term" value="C:protein-containing complex"/>
    <property type="evidence" value="ECO:0007669"/>
    <property type="project" value="UniProtKB-ARBA"/>
</dbReference>
<dbReference type="GO" id="GO:0005524">
    <property type="term" value="F:ATP binding"/>
    <property type="evidence" value="ECO:0007669"/>
    <property type="project" value="UniProtKB-UniRule"/>
</dbReference>
<dbReference type="GO" id="GO:0004818">
    <property type="term" value="F:glutamate-tRNA ligase activity"/>
    <property type="evidence" value="ECO:0007669"/>
    <property type="project" value="UniProtKB-UniRule"/>
</dbReference>
<dbReference type="GO" id="GO:0043604">
    <property type="term" value="P:amide biosynthetic process"/>
    <property type="evidence" value="ECO:0007669"/>
    <property type="project" value="TreeGrafter"/>
</dbReference>
<dbReference type="GO" id="GO:0006424">
    <property type="term" value="P:glutamyl-tRNA aminoacylation"/>
    <property type="evidence" value="ECO:0007669"/>
    <property type="project" value="UniProtKB-UniRule"/>
</dbReference>
<dbReference type="CDD" id="cd09287">
    <property type="entry name" value="GluRS_non_core"/>
    <property type="match status" value="1"/>
</dbReference>
<dbReference type="Gene3D" id="2.40.240.100">
    <property type="match status" value="1"/>
</dbReference>
<dbReference type="Gene3D" id="3.40.50.620">
    <property type="entry name" value="HUPs"/>
    <property type="match status" value="1"/>
</dbReference>
<dbReference type="Gene3D" id="2.40.240.10">
    <property type="entry name" value="Ribosomal Protein L25, Chain P"/>
    <property type="match status" value="1"/>
</dbReference>
<dbReference type="HAMAP" id="MF_02076">
    <property type="entry name" value="Glu_tRNA_synth_type2"/>
    <property type="match status" value="1"/>
</dbReference>
<dbReference type="InterPro" id="IPR001412">
    <property type="entry name" value="aa-tRNA-synth_I_CS"/>
</dbReference>
<dbReference type="InterPro" id="IPR050132">
    <property type="entry name" value="Gln/Glu-tRNA_Ligase"/>
</dbReference>
<dbReference type="InterPro" id="IPR004526">
    <property type="entry name" value="Glu-tRNA-synth_arc/euk"/>
</dbReference>
<dbReference type="InterPro" id="IPR000924">
    <property type="entry name" value="Glu/Gln-tRNA-synth"/>
</dbReference>
<dbReference type="InterPro" id="IPR020058">
    <property type="entry name" value="Glu/Gln-tRNA-synth_Ib_cat-dom"/>
</dbReference>
<dbReference type="InterPro" id="IPR020059">
    <property type="entry name" value="Glu/Gln-tRNA-synth_Ib_codon-bd"/>
</dbReference>
<dbReference type="InterPro" id="IPR020056">
    <property type="entry name" value="Rbsml_bL25/Gln-tRNA_synth_N"/>
</dbReference>
<dbReference type="InterPro" id="IPR011035">
    <property type="entry name" value="Ribosomal_bL25/Gln-tRNA_synth"/>
</dbReference>
<dbReference type="InterPro" id="IPR014729">
    <property type="entry name" value="Rossmann-like_a/b/a_fold"/>
</dbReference>
<dbReference type="NCBIfam" id="TIGR00463">
    <property type="entry name" value="gltX_arch"/>
    <property type="match status" value="1"/>
</dbReference>
<dbReference type="NCBIfam" id="NF003169">
    <property type="entry name" value="PRK04156.1"/>
    <property type="match status" value="1"/>
</dbReference>
<dbReference type="PANTHER" id="PTHR43097:SF5">
    <property type="entry name" value="GLUTAMATE--TRNA LIGASE"/>
    <property type="match status" value="1"/>
</dbReference>
<dbReference type="PANTHER" id="PTHR43097">
    <property type="entry name" value="GLUTAMINE-TRNA LIGASE"/>
    <property type="match status" value="1"/>
</dbReference>
<dbReference type="Pfam" id="PF00749">
    <property type="entry name" value="tRNA-synt_1c"/>
    <property type="match status" value="1"/>
</dbReference>
<dbReference type="Pfam" id="PF03950">
    <property type="entry name" value="tRNA-synt_1c_C"/>
    <property type="match status" value="1"/>
</dbReference>
<dbReference type="PRINTS" id="PR00987">
    <property type="entry name" value="TRNASYNTHGLU"/>
</dbReference>
<dbReference type="SUPFAM" id="SSF52374">
    <property type="entry name" value="Nucleotidylyl transferase"/>
    <property type="match status" value="1"/>
</dbReference>
<dbReference type="SUPFAM" id="SSF50715">
    <property type="entry name" value="Ribosomal protein L25-like"/>
    <property type="match status" value="1"/>
</dbReference>
<dbReference type="PROSITE" id="PS00178">
    <property type="entry name" value="AA_TRNA_LIGASE_I"/>
    <property type="match status" value="1"/>
</dbReference>
<feature type="chain" id="PRO_0000119733" description="Glutamate--tRNA ligase">
    <location>
        <begin position="1"/>
        <end position="548"/>
    </location>
</feature>
<feature type="short sequence motif" description="'HIGH' region" evidence="1">
    <location>
        <begin position="102"/>
        <end position="112"/>
    </location>
</feature>